<gene>
    <name type="primary">sdhE</name>
    <name type="synonym">ygfY</name>
    <name type="ordered locus">c3477</name>
</gene>
<protein>
    <recommendedName>
        <fullName>FAD assembly factor SdhE</fullName>
    </recommendedName>
</protein>
<accession>P64560</accession>
<accession>Q46825</accession>
<feature type="chain" id="PRO_0000214396" description="FAD assembly factor SdhE">
    <location>
        <begin position="1"/>
        <end position="88"/>
    </location>
</feature>
<organism>
    <name type="scientific">Escherichia coli O6:H1 (strain CFT073 / ATCC 700928 / UPEC)</name>
    <dbReference type="NCBI Taxonomy" id="199310"/>
    <lineage>
        <taxon>Bacteria</taxon>
        <taxon>Pseudomonadati</taxon>
        <taxon>Pseudomonadota</taxon>
        <taxon>Gammaproteobacteria</taxon>
        <taxon>Enterobacterales</taxon>
        <taxon>Enterobacteriaceae</taxon>
        <taxon>Escherichia</taxon>
    </lineage>
</organism>
<sequence length="88" mass="10547">MDINNKARIHWACRRGMRELDISIMPFFEHEYDSLSDDEKRIFIRLLECDDPDLFNWLMNHGKPADAELEMMVRLIQTRNRERGPVAI</sequence>
<keyword id="KW-0143">Chaperone</keyword>
<keyword id="KW-0963">Cytoplasm</keyword>
<keyword id="KW-1185">Reference proteome</keyword>
<name>SDHE_ECOL6</name>
<comment type="function">
    <text evidence="1">An FAD assembly protein, which accelerates covalent attachment of the cofactor into other proteins. Plays an essential role in the assembly of succinate dehydrogenase (SDH, respiratory complex II), an enzyme complex that is a component of both the tricarboxylic acid cycle and the electron transport chain, and which couples the oxidation of succinate to fumarate with the reduction of ubiquinone (coenzyme Q) to ubiquinol. Required for flavinylation (covalent attachment of FAD) of the flavoprotein subunit SdhA of SDH and other flavinylated proteins as well.</text>
</comment>
<comment type="subunit">
    <text evidence="2">Monomer.</text>
</comment>
<comment type="subcellular location">
    <subcellularLocation>
        <location evidence="1">Cytoplasm</location>
    </subcellularLocation>
</comment>
<comment type="similarity">
    <text evidence="3">Belongs to the SdhE FAD assembly factor family.</text>
</comment>
<dbReference type="EMBL" id="AE014075">
    <property type="protein sequence ID" value="AAN81925.1"/>
    <property type="molecule type" value="Genomic_DNA"/>
</dbReference>
<dbReference type="RefSeq" id="WP_000354046.1">
    <property type="nucleotide sequence ID" value="NZ_CP051263.1"/>
</dbReference>
<dbReference type="SMR" id="P64560"/>
<dbReference type="STRING" id="199310.c3477"/>
<dbReference type="GeneID" id="93779105"/>
<dbReference type="KEGG" id="ecc:c3477"/>
<dbReference type="eggNOG" id="COG2938">
    <property type="taxonomic scope" value="Bacteria"/>
</dbReference>
<dbReference type="HOGENOM" id="CLU_103054_2_2_6"/>
<dbReference type="BioCyc" id="ECOL199310:C3477-MONOMER"/>
<dbReference type="Proteomes" id="UP000001410">
    <property type="component" value="Chromosome"/>
</dbReference>
<dbReference type="GO" id="GO:0005737">
    <property type="term" value="C:cytoplasm"/>
    <property type="evidence" value="ECO:0007669"/>
    <property type="project" value="UniProtKB-SubCell"/>
</dbReference>
<dbReference type="GO" id="GO:0006105">
    <property type="term" value="P:succinate metabolic process"/>
    <property type="evidence" value="ECO:0007669"/>
    <property type="project" value="TreeGrafter"/>
</dbReference>
<dbReference type="FunFam" id="1.10.150.250:FF:000001">
    <property type="entry name" value="FAD assembly factor SdhE"/>
    <property type="match status" value="1"/>
</dbReference>
<dbReference type="Gene3D" id="1.10.150.250">
    <property type="entry name" value="Flavinator of succinate dehydrogenase"/>
    <property type="match status" value="1"/>
</dbReference>
<dbReference type="InterPro" id="IPR005631">
    <property type="entry name" value="SDH"/>
</dbReference>
<dbReference type="InterPro" id="IPR036714">
    <property type="entry name" value="SDH_sf"/>
</dbReference>
<dbReference type="InterPro" id="IPR050531">
    <property type="entry name" value="SdhE_FAD_assembly_factor"/>
</dbReference>
<dbReference type="NCBIfam" id="NF008130">
    <property type="entry name" value="PRK10878.1"/>
    <property type="match status" value="1"/>
</dbReference>
<dbReference type="PANTHER" id="PTHR39585">
    <property type="entry name" value="FAD ASSEMBLY FACTOR SDHE"/>
    <property type="match status" value="1"/>
</dbReference>
<dbReference type="PANTHER" id="PTHR39585:SF1">
    <property type="entry name" value="FAD ASSEMBLY FACTOR SDHE"/>
    <property type="match status" value="1"/>
</dbReference>
<dbReference type="Pfam" id="PF03937">
    <property type="entry name" value="Sdh5"/>
    <property type="match status" value="1"/>
</dbReference>
<dbReference type="SUPFAM" id="SSF109910">
    <property type="entry name" value="YgfY-like"/>
    <property type="match status" value="1"/>
</dbReference>
<evidence type="ECO:0000250" key="1">
    <source>
        <dbReference type="UniProtKB" id="G4V4G2"/>
    </source>
</evidence>
<evidence type="ECO:0000250" key="2">
    <source>
        <dbReference type="UniProtKB" id="P64559"/>
    </source>
</evidence>
<evidence type="ECO:0000305" key="3"/>
<reference key="1">
    <citation type="journal article" date="2002" name="Proc. Natl. Acad. Sci. U.S.A.">
        <title>Extensive mosaic structure revealed by the complete genome sequence of uropathogenic Escherichia coli.</title>
        <authorList>
            <person name="Welch R.A."/>
            <person name="Burland V."/>
            <person name="Plunkett G. III"/>
            <person name="Redford P."/>
            <person name="Roesch P."/>
            <person name="Rasko D."/>
            <person name="Buckles E.L."/>
            <person name="Liou S.-R."/>
            <person name="Boutin A."/>
            <person name="Hackett J."/>
            <person name="Stroud D."/>
            <person name="Mayhew G.F."/>
            <person name="Rose D.J."/>
            <person name="Zhou S."/>
            <person name="Schwartz D.C."/>
            <person name="Perna N.T."/>
            <person name="Mobley H.L.T."/>
            <person name="Donnenberg M.S."/>
            <person name="Blattner F.R."/>
        </authorList>
    </citation>
    <scope>NUCLEOTIDE SEQUENCE [LARGE SCALE GENOMIC DNA]</scope>
    <source>
        <strain>CFT073 / ATCC 700928 / UPEC</strain>
    </source>
</reference>
<proteinExistence type="inferred from homology"/>